<gene>
    <name evidence="1" type="primary">cobT</name>
    <name type="ordered locus">PputGB1_1278</name>
</gene>
<protein>
    <recommendedName>
        <fullName evidence="1">Nicotinate-nucleotide--dimethylbenzimidazole phosphoribosyltransferase</fullName>
        <shortName evidence="1">NN:DBI PRT</shortName>
        <ecNumber evidence="1">2.4.2.21</ecNumber>
    </recommendedName>
    <alternativeName>
        <fullName evidence="1">N(1)-alpha-phosphoribosyltransferase</fullName>
    </alternativeName>
</protein>
<proteinExistence type="inferred from homology"/>
<keyword id="KW-0169">Cobalamin biosynthesis</keyword>
<keyword id="KW-0328">Glycosyltransferase</keyword>
<keyword id="KW-0808">Transferase</keyword>
<comment type="function">
    <text evidence="1">Catalyzes the synthesis of alpha-ribazole-5'-phosphate from nicotinate mononucleotide (NAMN) and 5,6-dimethylbenzimidazole (DMB).</text>
</comment>
<comment type="catalytic activity">
    <reaction evidence="1">
        <text>5,6-dimethylbenzimidazole + nicotinate beta-D-ribonucleotide = alpha-ribazole 5'-phosphate + nicotinate + H(+)</text>
        <dbReference type="Rhea" id="RHEA:11196"/>
        <dbReference type="ChEBI" id="CHEBI:15378"/>
        <dbReference type="ChEBI" id="CHEBI:15890"/>
        <dbReference type="ChEBI" id="CHEBI:32544"/>
        <dbReference type="ChEBI" id="CHEBI:57502"/>
        <dbReference type="ChEBI" id="CHEBI:57918"/>
        <dbReference type="EC" id="2.4.2.21"/>
    </reaction>
</comment>
<comment type="pathway">
    <text evidence="1">Nucleoside biosynthesis; alpha-ribazole biosynthesis; alpha-ribazole from 5,6-dimethylbenzimidazole: step 1/2.</text>
</comment>
<comment type="similarity">
    <text evidence="1">Belongs to the CobT family.</text>
</comment>
<reference key="1">
    <citation type="submission" date="2008-01" db="EMBL/GenBank/DDBJ databases">
        <title>Complete sequence of Pseudomonas putida GB-1.</title>
        <authorList>
            <consortium name="US DOE Joint Genome Institute"/>
            <person name="Copeland A."/>
            <person name="Lucas S."/>
            <person name="Lapidus A."/>
            <person name="Barry K."/>
            <person name="Glavina del Rio T."/>
            <person name="Dalin E."/>
            <person name="Tice H."/>
            <person name="Pitluck S."/>
            <person name="Bruce D."/>
            <person name="Goodwin L."/>
            <person name="Chertkov O."/>
            <person name="Brettin T."/>
            <person name="Detter J.C."/>
            <person name="Han C."/>
            <person name="Kuske C.R."/>
            <person name="Schmutz J."/>
            <person name="Larimer F."/>
            <person name="Land M."/>
            <person name="Hauser L."/>
            <person name="Kyrpides N."/>
            <person name="Kim E."/>
            <person name="McCarthy J.K."/>
            <person name="Richardson P."/>
        </authorList>
    </citation>
    <scope>NUCLEOTIDE SEQUENCE [LARGE SCALE GENOMIC DNA]</scope>
    <source>
        <strain>GB-1</strain>
    </source>
</reference>
<feature type="chain" id="PRO_1000078245" description="Nicotinate-nucleotide--dimethylbenzimidazole phosphoribosyltransferase">
    <location>
        <begin position="1"/>
        <end position="351"/>
    </location>
</feature>
<feature type="active site" description="Proton acceptor" evidence="1">
    <location>
        <position position="317"/>
    </location>
</feature>
<organism>
    <name type="scientific">Pseudomonas putida (strain GB-1)</name>
    <dbReference type="NCBI Taxonomy" id="76869"/>
    <lineage>
        <taxon>Bacteria</taxon>
        <taxon>Pseudomonadati</taxon>
        <taxon>Pseudomonadota</taxon>
        <taxon>Gammaproteobacteria</taxon>
        <taxon>Pseudomonadales</taxon>
        <taxon>Pseudomonadaceae</taxon>
        <taxon>Pseudomonas</taxon>
    </lineage>
</organism>
<sequence length="351" mass="35952">MTQAWWRDACHPLDNDAMDQAHARQQQLTKPAGSLGQLEGLAIQLAGLQGCERPILDQVAITIFAGDHGVVEEGISAYPQAVTGQMLRNFVGGGAAISVLARQLQASLEVVDLGTIDAQLELPGVRHLRLGAGTANFACQPAMTENQLQAALQAGRDSALRAAEQGAQLFIGGEMGIGNTTAAAALASVLLSCPAAQLSGPGTGLDNAGVRHKAEVIERALRLHGLRAENPLQALGCVGGFEIAALAGAYIGCAQAGVAVLVDGFICSVAALVAVHLNPQCRAWLLFAHQGAEPGHKALLAALQAEPLLALGLRLGEGSGAALAVPLLRLACALHGQMATFAEAAVADRPA</sequence>
<dbReference type="EC" id="2.4.2.21" evidence="1"/>
<dbReference type="EMBL" id="CP000926">
    <property type="protein sequence ID" value="ABY97185.1"/>
    <property type="molecule type" value="Genomic_DNA"/>
</dbReference>
<dbReference type="RefSeq" id="WP_012270960.1">
    <property type="nucleotide sequence ID" value="NC_010322.1"/>
</dbReference>
<dbReference type="SMR" id="B0KT67"/>
<dbReference type="KEGG" id="ppg:PputGB1_1278"/>
<dbReference type="eggNOG" id="COG2038">
    <property type="taxonomic scope" value="Bacteria"/>
</dbReference>
<dbReference type="HOGENOM" id="CLU_002982_0_1_6"/>
<dbReference type="UniPathway" id="UPA00061">
    <property type="reaction ID" value="UER00516"/>
</dbReference>
<dbReference type="Proteomes" id="UP000002157">
    <property type="component" value="Chromosome"/>
</dbReference>
<dbReference type="GO" id="GO:0008939">
    <property type="term" value="F:nicotinate-nucleotide-dimethylbenzimidazole phosphoribosyltransferase activity"/>
    <property type="evidence" value="ECO:0007669"/>
    <property type="project" value="UniProtKB-UniRule"/>
</dbReference>
<dbReference type="GO" id="GO:0009236">
    <property type="term" value="P:cobalamin biosynthetic process"/>
    <property type="evidence" value="ECO:0007669"/>
    <property type="project" value="UniProtKB-KW"/>
</dbReference>
<dbReference type="CDD" id="cd02439">
    <property type="entry name" value="DMB-PRT_CobT"/>
    <property type="match status" value="1"/>
</dbReference>
<dbReference type="FunFam" id="3.40.50.10210:FF:000001">
    <property type="entry name" value="Nicotinate-nucleotide--dimethylbenzimidazole phosphoribosyltransferase"/>
    <property type="match status" value="1"/>
</dbReference>
<dbReference type="Gene3D" id="1.10.1610.10">
    <property type="match status" value="1"/>
</dbReference>
<dbReference type="Gene3D" id="3.40.50.10210">
    <property type="match status" value="1"/>
</dbReference>
<dbReference type="HAMAP" id="MF_00230">
    <property type="entry name" value="CobT"/>
    <property type="match status" value="1"/>
</dbReference>
<dbReference type="InterPro" id="IPR003200">
    <property type="entry name" value="Nict_dMeBzImd_PRibTrfase"/>
</dbReference>
<dbReference type="InterPro" id="IPR017846">
    <property type="entry name" value="Nict_dMeBzImd_PRibTrfase_bact"/>
</dbReference>
<dbReference type="InterPro" id="IPR023195">
    <property type="entry name" value="Nict_dMeBzImd_PRibTrfase_N"/>
</dbReference>
<dbReference type="InterPro" id="IPR036087">
    <property type="entry name" value="Nict_dMeBzImd_PRibTrfase_sf"/>
</dbReference>
<dbReference type="NCBIfam" id="TIGR03160">
    <property type="entry name" value="cobT_DBIPRT"/>
    <property type="match status" value="1"/>
</dbReference>
<dbReference type="NCBIfam" id="NF000996">
    <property type="entry name" value="PRK00105.1"/>
    <property type="match status" value="1"/>
</dbReference>
<dbReference type="PANTHER" id="PTHR43463">
    <property type="entry name" value="NICOTINATE-NUCLEOTIDE--DIMETHYLBENZIMIDAZOLE PHOSPHORIBOSYLTRANSFERASE"/>
    <property type="match status" value="1"/>
</dbReference>
<dbReference type="PANTHER" id="PTHR43463:SF1">
    <property type="entry name" value="NICOTINATE-NUCLEOTIDE--DIMETHYLBENZIMIDAZOLE PHOSPHORIBOSYLTRANSFERASE"/>
    <property type="match status" value="1"/>
</dbReference>
<dbReference type="Pfam" id="PF02277">
    <property type="entry name" value="DBI_PRT"/>
    <property type="match status" value="1"/>
</dbReference>
<dbReference type="SUPFAM" id="SSF52733">
    <property type="entry name" value="Nicotinate mononucleotide:5,6-dimethylbenzimidazole phosphoribosyltransferase (CobT)"/>
    <property type="match status" value="1"/>
</dbReference>
<evidence type="ECO:0000255" key="1">
    <source>
        <dbReference type="HAMAP-Rule" id="MF_00230"/>
    </source>
</evidence>
<accession>B0KT67</accession>
<name>COBT_PSEPG</name>